<name>EDAD_HUMAN</name>
<feature type="chain" id="PRO_0000086928" description="Ectodysplasin-A receptor-associated adapter protein">
    <location>
        <begin position="1"/>
        <end position="215"/>
    </location>
</feature>
<feature type="domain" description="Death">
    <location>
        <begin position="123"/>
        <end position="202"/>
    </location>
</feature>
<feature type="region of interest" description="Disordered" evidence="1">
    <location>
        <begin position="1"/>
        <end position="41"/>
    </location>
</feature>
<feature type="region of interest" description="Disordered" evidence="1">
    <location>
        <begin position="62"/>
        <end position="86"/>
    </location>
</feature>
<feature type="compositionally biased region" description="Basic and acidic residues" evidence="1">
    <location>
        <begin position="17"/>
        <end position="28"/>
    </location>
</feature>
<feature type="splice variant" id="VSP_003861" description="In isoform B." evidence="11 12 13">
    <original>MGLRTTKQMGRGTKAPGHQE</original>
    <variation>MASPDDPLRA</variation>
    <location>
        <begin position="1"/>
        <end position="20"/>
    </location>
</feature>
<feature type="sequence variant" id="VAR_050963" description="In dbSNP:rs966365." evidence="4 5 10">
    <original>M</original>
    <variation>I</variation>
    <location>
        <position position="9"/>
    </location>
</feature>
<feature type="sequence variant" id="VAR_054509" description="In dbSNP:rs114632254." evidence="7">
    <original>S</original>
    <variation>F</variation>
    <location>
        <position position="103"/>
    </location>
</feature>
<feature type="sequence variant" id="VAR_064835" description="In ECTD11A." evidence="9">
    <original>D</original>
    <variation>Y</variation>
    <location>
        <position position="114"/>
    </location>
</feature>
<feature type="sequence variant" id="VAR_054510" description="In ECTD11A; severely impairs NF-kappa-B activation and acted in a dominant-negative manner; dbSNP:rs121908116." evidence="6">
    <original>L</original>
    <variation>R</variation>
    <location>
        <position position="122"/>
    </location>
</feature>
<feature type="sequence variant" id="VAR_064836" description="In ECTD11B; impairs the interaction with EDAR and severely inhibits NF-kappa-B activity." evidence="8">
    <location>
        <begin position="135"/>
        <end position="136"/>
    </location>
</feature>
<feature type="sequence variant" id="VAR_013482" description="In ECTD11B; may reduce binding to EDAR; impairs NF-kappa-B activation by about 50%; dbSNP:rs74315309." evidence="2 6">
    <original>E</original>
    <variation>K</variation>
    <location>
        <position position="152"/>
    </location>
</feature>
<sequence length="215" mass="24802">MGLRTTKQMGRGTKAPGHQEDHMVKEPVEDTDPSTLSFNMSDKYPIQDTELPKAEECDTITLNCPRNSDMKNQGEENGFPDSTGDPLPEISKDNSCKENCTCSSCLLRAPTISDLLNDQDLLDVIRIKLDPCHPTVKNWRNFASKWGMSYDELCFLEQRPQSPTLEFLLRNSQRTVGQLMELCRLYHRADVEKVLRRWVDEEWPKRERGDPSRHF</sequence>
<organism>
    <name type="scientific">Homo sapiens</name>
    <name type="common">Human</name>
    <dbReference type="NCBI Taxonomy" id="9606"/>
    <lineage>
        <taxon>Eukaryota</taxon>
        <taxon>Metazoa</taxon>
        <taxon>Chordata</taxon>
        <taxon>Craniata</taxon>
        <taxon>Vertebrata</taxon>
        <taxon>Euteleostomi</taxon>
        <taxon>Mammalia</taxon>
        <taxon>Eutheria</taxon>
        <taxon>Euarchontoglires</taxon>
        <taxon>Primates</taxon>
        <taxon>Haplorrhini</taxon>
        <taxon>Catarrhini</taxon>
        <taxon>Hominidae</taxon>
        <taxon>Homo</taxon>
    </lineage>
</organism>
<accession>Q8WWZ3</accession>
<accession>A2VCK5</accession>
<accession>A8K7B5</accession>
<accession>B1AL54</accession>
<accession>B9ZVW5</accession>
<accession>Q5VYJ7</accession>
<comment type="function">
    <text evidence="3">Adapter protein that interacts with EDAR DEATH domain and couples the receptor to EDA signaling pathway during morphogenesis of ectodermal organs. Mediates the activation of NF-kappa-B.</text>
</comment>
<comment type="subunit">
    <text>Self-associates and binds EDAR, TRAF1, TRAF2 and TRAF3.</text>
</comment>
<comment type="interaction">
    <interactant intactId="EBI-2949647">
        <id>Q8WWZ3</id>
    </interactant>
    <interactant intactId="EBI-741158">
        <id>Q96HA8</id>
        <label>NTAQ1</label>
    </interactant>
    <organismsDiffer>false</organismsDiffer>
    <experiments>4</experiments>
</comment>
<comment type="interaction">
    <interactant intactId="EBI-2949647">
        <id>Q8WWZ3</id>
    </interactant>
    <interactant intactId="EBI-2129175">
        <id>Q6ZNA4</id>
        <label>RNF111</label>
    </interactant>
    <organismsDiffer>false</organismsDiffer>
    <experiments>3</experiments>
</comment>
<comment type="interaction">
    <interactant intactId="EBI-2949647">
        <id>Q8WWZ3</id>
    </interactant>
    <interactant intactId="EBI-727004">
        <id>O00560</id>
        <label>SDCBP</label>
    </interactant>
    <organismsDiffer>false</organismsDiffer>
    <experiments>3</experiments>
</comment>
<comment type="interaction">
    <interactant intactId="EBI-2949647">
        <id>Q8WWZ3</id>
    </interactant>
    <interactant intactId="EBI-714105">
        <id>Q149N8</id>
        <label>SHPRH</label>
    </interactant>
    <organismsDiffer>false</organismsDiffer>
    <experiments>3</experiments>
</comment>
<comment type="interaction">
    <interactant intactId="EBI-2949647">
        <id>Q8WWZ3</id>
    </interactant>
    <interactant intactId="EBI-80140">
        <id>P63165</id>
        <label>SUMO1</label>
    </interactant>
    <organismsDiffer>false</organismsDiffer>
    <experiments>5</experiments>
</comment>
<comment type="interaction">
    <interactant intactId="EBI-2949647">
        <id>Q8WWZ3</id>
    </interactant>
    <interactant intactId="EBI-10175576">
        <id>G2XKQ0</id>
        <label>SUMO1P1</label>
    </interactant>
    <organismsDiffer>false</organismsDiffer>
    <experiments>5</experiments>
</comment>
<comment type="interaction">
    <interactant intactId="EBI-2949647">
        <id>Q8WWZ3</id>
    </interactant>
    <interactant intactId="EBI-355744">
        <id>Q12933</id>
        <label>TRAF2</label>
    </interactant>
    <organismsDiffer>false</organismsDiffer>
    <experiments>5</experiments>
</comment>
<comment type="interaction">
    <interactant intactId="EBI-2949647">
        <id>Q8WWZ3</id>
    </interactant>
    <interactant intactId="EBI-359276">
        <id>Q9Y4K3</id>
        <label>TRAF6</label>
    </interactant>
    <organismsDiffer>false</organismsDiffer>
    <experiments>5</experiments>
</comment>
<comment type="interaction">
    <interactant intactId="EBI-2949647">
        <id>Q8WWZ3</id>
    </interactant>
    <interactant intactId="EBI-80168">
        <id>P63279</id>
        <label>UBE2I</label>
    </interactant>
    <organismsDiffer>false</organismsDiffer>
    <experiments>3</experiments>
</comment>
<comment type="subcellular location">
    <subcellularLocation>
        <location evidence="14">Cytoplasm</location>
    </subcellularLocation>
</comment>
<comment type="alternative products">
    <event type="alternative splicing"/>
    <isoform>
        <id>Q8WWZ3-1</id>
        <name>A</name>
        <sequence type="displayed"/>
    </isoform>
    <isoform>
        <id>Q8WWZ3-2</id>
        <name>B</name>
        <sequence type="described" ref="VSP_003861"/>
    </isoform>
</comment>
<comment type="tissue specificity">
    <text>Detected in adult pancreas, placenta and fetal skin, and at lower levels in lung, thymus, prostate and testis.</text>
</comment>
<comment type="disease" evidence="6 9">
    <disease id="DI-03617">
        <name>Ectodermal dysplasia 11A, hypohidrotic/hair/nail type, autosomal dominant</name>
        <acronym>ECTD11A</acronym>
        <description>A form of ectodermal dysplasia, a heterogeneous group of disorders due to abnormal development of two or more ectodermal structures. It is an autosomal dominant condition characterized by hypotrichosis, abnormal or missing teeth, and hypohidrosis due to the absence of sweat glands.</description>
        <dbReference type="MIM" id="614940"/>
    </disease>
    <text>The disease is caused by variants affecting the gene represented in this entry.</text>
</comment>
<comment type="disease" evidence="2 6 8">
    <disease id="DI-03618">
        <name>Ectodermal dysplasia 11B, hypohidrotic/hair/tooth type, autosomal recessive</name>
        <acronym>ECTD11B</acronym>
        <description>A disorder due to abnormal development of two or more ectodermal structures, and characterized by sparse hair (atrichosis or hypotrichosis), abnormal or missing teeth and the inability to sweat due to the absence of sweat glands.</description>
        <dbReference type="MIM" id="614941"/>
    </disease>
    <text>The disease is caused by variants affecting the gene represented in this entry.</text>
</comment>
<protein>
    <recommendedName>
        <fullName>Ectodysplasin-A receptor-associated adapter protein</fullName>
    </recommendedName>
    <alternativeName>
        <fullName>EDAR-associated death domain protein</fullName>
    </alternativeName>
    <alternativeName>
        <fullName>Protein crinkled homolog</fullName>
    </alternativeName>
</protein>
<evidence type="ECO:0000256" key="1">
    <source>
        <dbReference type="SAM" id="MobiDB-lite"/>
    </source>
</evidence>
<evidence type="ECO:0000269" key="2">
    <source>
    </source>
</evidence>
<evidence type="ECO:0000269" key="3">
    <source>
    </source>
</evidence>
<evidence type="ECO:0000269" key="4">
    <source>
    </source>
</evidence>
<evidence type="ECO:0000269" key="5">
    <source>
    </source>
</evidence>
<evidence type="ECO:0000269" key="6">
    <source>
    </source>
</evidence>
<evidence type="ECO:0000269" key="7">
    <source>
    </source>
</evidence>
<evidence type="ECO:0000269" key="8">
    <source>
    </source>
</evidence>
<evidence type="ECO:0000269" key="9">
    <source>
    </source>
</evidence>
<evidence type="ECO:0000269" key="10">
    <source ref="3"/>
</evidence>
<evidence type="ECO:0000303" key="11">
    <source>
    </source>
</evidence>
<evidence type="ECO:0000303" key="12">
    <source>
    </source>
</evidence>
<evidence type="ECO:0000303" key="13">
    <source>
    </source>
</evidence>
<evidence type="ECO:0000305" key="14"/>
<keyword id="KW-0025">Alternative splicing</keyword>
<keyword id="KW-0963">Cytoplasm</keyword>
<keyword id="KW-0217">Developmental protein</keyword>
<keyword id="KW-0221">Differentiation</keyword>
<keyword id="KW-0225">Disease variant</keyword>
<keyword id="KW-0038">Ectodermal dysplasia</keyword>
<keyword id="KW-1267">Proteomics identification</keyword>
<keyword id="KW-1185">Reference proteome</keyword>
<reference key="1">
    <citation type="journal article" date="2001" name="Nature">
        <title>Gene defect in ectodermal dysplasia implicates a DEATH domain adapter in development.</title>
        <authorList>
            <person name="Headon D.J."/>
            <person name="Emmal S.A."/>
            <person name="Ferguson B.M."/>
            <person name="Tucker A.S."/>
            <person name="Justice M.J."/>
            <person name="Sharpe P.T."/>
            <person name="Zonana J."/>
            <person name="Overbeek P.A."/>
        </authorList>
    </citation>
    <scope>NUCLEOTIDE SEQUENCE [MRNA] (ISOFORM B)</scope>
    <scope>VARIANT ECTD11B LYS-152</scope>
</reference>
<reference key="2">
    <citation type="journal article" date="2002" name="Curr. Biol.">
        <title>Identification of a novel DEATH domain-containing adaptor molecule for ectodysplasin-A receptor that is mutated in crinkled mice.</title>
        <authorList>
            <person name="Yan M."/>
            <person name="Zhang Z."/>
            <person name="Brady J.R."/>
            <person name="Schilbach S."/>
            <person name="Fairbrother W.J."/>
            <person name="Dixit V.M."/>
        </authorList>
    </citation>
    <scope>NUCLEOTIDE SEQUENCE [MRNA] (ISOFORM B)</scope>
    <scope>FUNCTION</scope>
    <source>
        <tissue>Skin</tissue>
    </source>
</reference>
<reference key="3">
    <citation type="submission" date="2002-03" db="EMBL/GenBank/DDBJ databases">
        <title>A novel death domain adapter required for ectodermal development.</title>
        <authorList>
            <person name="Emmal S.A."/>
            <person name="Ferguson B.M."/>
            <person name="Zonana J."/>
        </authorList>
    </citation>
    <scope>NUCLEOTIDE SEQUENCE [MRNA] (ISOFORM A)</scope>
    <scope>NUCLEOTIDE SEQUENCE [GENOMIC DNA]</scope>
    <scope>VARIANT ILE-9</scope>
</reference>
<reference key="4">
    <citation type="journal article" date="2004" name="Nat. Genet.">
        <title>Complete sequencing and characterization of 21,243 full-length human cDNAs.</title>
        <authorList>
            <person name="Ota T."/>
            <person name="Suzuki Y."/>
            <person name="Nishikawa T."/>
            <person name="Otsuki T."/>
            <person name="Sugiyama T."/>
            <person name="Irie R."/>
            <person name="Wakamatsu A."/>
            <person name="Hayashi K."/>
            <person name="Sato H."/>
            <person name="Nagai K."/>
            <person name="Kimura K."/>
            <person name="Makita H."/>
            <person name="Sekine M."/>
            <person name="Obayashi M."/>
            <person name="Nishi T."/>
            <person name="Shibahara T."/>
            <person name="Tanaka T."/>
            <person name="Ishii S."/>
            <person name="Yamamoto J."/>
            <person name="Saito K."/>
            <person name="Kawai Y."/>
            <person name="Isono Y."/>
            <person name="Nakamura Y."/>
            <person name="Nagahari K."/>
            <person name="Murakami K."/>
            <person name="Yasuda T."/>
            <person name="Iwayanagi T."/>
            <person name="Wagatsuma M."/>
            <person name="Shiratori A."/>
            <person name="Sudo H."/>
            <person name="Hosoiri T."/>
            <person name="Kaku Y."/>
            <person name="Kodaira H."/>
            <person name="Kondo H."/>
            <person name="Sugawara M."/>
            <person name="Takahashi M."/>
            <person name="Kanda K."/>
            <person name="Yokoi T."/>
            <person name="Furuya T."/>
            <person name="Kikkawa E."/>
            <person name="Omura Y."/>
            <person name="Abe K."/>
            <person name="Kamihara K."/>
            <person name="Katsuta N."/>
            <person name="Sato K."/>
            <person name="Tanikawa M."/>
            <person name="Yamazaki M."/>
            <person name="Ninomiya K."/>
            <person name="Ishibashi T."/>
            <person name="Yamashita H."/>
            <person name="Murakawa K."/>
            <person name="Fujimori K."/>
            <person name="Tanai H."/>
            <person name="Kimata M."/>
            <person name="Watanabe M."/>
            <person name="Hiraoka S."/>
            <person name="Chiba Y."/>
            <person name="Ishida S."/>
            <person name="Ono Y."/>
            <person name="Takiguchi S."/>
            <person name="Watanabe S."/>
            <person name="Yosida M."/>
            <person name="Hotuta T."/>
            <person name="Kusano J."/>
            <person name="Kanehori K."/>
            <person name="Takahashi-Fujii A."/>
            <person name="Hara H."/>
            <person name="Tanase T.-O."/>
            <person name="Nomura Y."/>
            <person name="Togiya S."/>
            <person name="Komai F."/>
            <person name="Hara R."/>
            <person name="Takeuchi K."/>
            <person name="Arita M."/>
            <person name="Imose N."/>
            <person name="Musashino K."/>
            <person name="Yuuki H."/>
            <person name="Oshima A."/>
            <person name="Sasaki N."/>
            <person name="Aotsuka S."/>
            <person name="Yoshikawa Y."/>
            <person name="Matsunawa H."/>
            <person name="Ichihara T."/>
            <person name="Shiohata N."/>
            <person name="Sano S."/>
            <person name="Moriya S."/>
            <person name="Momiyama H."/>
            <person name="Satoh N."/>
            <person name="Takami S."/>
            <person name="Terashima Y."/>
            <person name="Suzuki O."/>
            <person name="Nakagawa S."/>
            <person name="Senoh A."/>
            <person name="Mizoguchi H."/>
            <person name="Goto Y."/>
            <person name="Shimizu F."/>
            <person name="Wakebe H."/>
            <person name="Hishigaki H."/>
            <person name="Watanabe T."/>
            <person name="Sugiyama A."/>
            <person name="Takemoto M."/>
            <person name="Kawakami B."/>
            <person name="Yamazaki M."/>
            <person name="Watanabe K."/>
            <person name="Kumagai A."/>
            <person name="Itakura S."/>
            <person name="Fukuzumi Y."/>
            <person name="Fujimori Y."/>
            <person name="Komiyama M."/>
            <person name="Tashiro H."/>
            <person name="Tanigami A."/>
            <person name="Fujiwara T."/>
            <person name="Ono T."/>
            <person name="Yamada K."/>
            <person name="Fujii Y."/>
            <person name="Ozaki K."/>
            <person name="Hirao M."/>
            <person name="Ohmori Y."/>
            <person name="Kawabata A."/>
            <person name="Hikiji T."/>
            <person name="Kobatake N."/>
            <person name="Inagaki H."/>
            <person name="Ikema Y."/>
            <person name="Okamoto S."/>
            <person name="Okitani R."/>
            <person name="Kawakami T."/>
            <person name="Noguchi S."/>
            <person name="Itoh T."/>
            <person name="Shigeta K."/>
            <person name="Senba T."/>
            <person name="Matsumura K."/>
            <person name="Nakajima Y."/>
            <person name="Mizuno T."/>
            <person name="Morinaga M."/>
            <person name="Sasaki M."/>
            <person name="Togashi T."/>
            <person name="Oyama M."/>
            <person name="Hata H."/>
            <person name="Watanabe M."/>
            <person name="Komatsu T."/>
            <person name="Mizushima-Sugano J."/>
            <person name="Satoh T."/>
            <person name="Shirai Y."/>
            <person name="Takahashi Y."/>
            <person name="Nakagawa K."/>
            <person name="Okumura K."/>
            <person name="Nagase T."/>
            <person name="Nomura N."/>
            <person name="Kikuchi H."/>
            <person name="Masuho Y."/>
            <person name="Yamashita R."/>
            <person name="Nakai K."/>
            <person name="Yada T."/>
            <person name="Nakamura Y."/>
            <person name="Ohara O."/>
            <person name="Isogai T."/>
            <person name="Sugano S."/>
        </authorList>
    </citation>
    <scope>NUCLEOTIDE SEQUENCE [LARGE SCALE MRNA] (ISOFORMS A AND B)</scope>
    <scope>VARIANT ILE-9</scope>
    <source>
        <tissue>Mammary gland</tissue>
        <tissue>Placenta</tissue>
    </source>
</reference>
<reference key="5">
    <citation type="journal article" date="2006" name="Nature">
        <title>The DNA sequence and biological annotation of human chromosome 1.</title>
        <authorList>
            <person name="Gregory S.G."/>
            <person name="Barlow K.F."/>
            <person name="McLay K.E."/>
            <person name="Kaul R."/>
            <person name="Swarbreck D."/>
            <person name="Dunham A."/>
            <person name="Scott C.E."/>
            <person name="Howe K.L."/>
            <person name="Woodfine K."/>
            <person name="Spencer C.C.A."/>
            <person name="Jones M.C."/>
            <person name="Gillson C."/>
            <person name="Searle S."/>
            <person name="Zhou Y."/>
            <person name="Kokocinski F."/>
            <person name="McDonald L."/>
            <person name="Evans R."/>
            <person name="Phillips K."/>
            <person name="Atkinson A."/>
            <person name="Cooper R."/>
            <person name="Jones C."/>
            <person name="Hall R.E."/>
            <person name="Andrews T.D."/>
            <person name="Lloyd C."/>
            <person name="Ainscough R."/>
            <person name="Almeida J.P."/>
            <person name="Ambrose K.D."/>
            <person name="Anderson F."/>
            <person name="Andrew R.W."/>
            <person name="Ashwell R.I.S."/>
            <person name="Aubin K."/>
            <person name="Babbage A.K."/>
            <person name="Bagguley C.L."/>
            <person name="Bailey J."/>
            <person name="Beasley H."/>
            <person name="Bethel G."/>
            <person name="Bird C.P."/>
            <person name="Bray-Allen S."/>
            <person name="Brown J.Y."/>
            <person name="Brown A.J."/>
            <person name="Buckley D."/>
            <person name="Burton J."/>
            <person name="Bye J."/>
            <person name="Carder C."/>
            <person name="Chapman J.C."/>
            <person name="Clark S.Y."/>
            <person name="Clarke G."/>
            <person name="Clee C."/>
            <person name="Cobley V."/>
            <person name="Collier R.E."/>
            <person name="Corby N."/>
            <person name="Coville G.J."/>
            <person name="Davies J."/>
            <person name="Deadman R."/>
            <person name="Dunn M."/>
            <person name="Earthrowl M."/>
            <person name="Ellington A.G."/>
            <person name="Errington H."/>
            <person name="Frankish A."/>
            <person name="Frankland J."/>
            <person name="French L."/>
            <person name="Garner P."/>
            <person name="Garnett J."/>
            <person name="Gay L."/>
            <person name="Ghori M.R.J."/>
            <person name="Gibson R."/>
            <person name="Gilby L.M."/>
            <person name="Gillett W."/>
            <person name="Glithero R.J."/>
            <person name="Grafham D.V."/>
            <person name="Griffiths C."/>
            <person name="Griffiths-Jones S."/>
            <person name="Grocock R."/>
            <person name="Hammond S."/>
            <person name="Harrison E.S.I."/>
            <person name="Hart E."/>
            <person name="Haugen E."/>
            <person name="Heath P.D."/>
            <person name="Holmes S."/>
            <person name="Holt K."/>
            <person name="Howden P.J."/>
            <person name="Hunt A.R."/>
            <person name="Hunt S.E."/>
            <person name="Hunter G."/>
            <person name="Isherwood J."/>
            <person name="James R."/>
            <person name="Johnson C."/>
            <person name="Johnson D."/>
            <person name="Joy A."/>
            <person name="Kay M."/>
            <person name="Kershaw J.K."/>
            <person name="Kibukawa M."/>
            <person name="Kimberley A.M."/>
            <person name="King A."/>
            <person name="Knights A.J."/>
            <person name="Lad H."/>
            <person name="Laird G."/>
            <person name="Lawlor S."/>
            <person name="Leongamornlert D.A."/>
            <person name="Lloyd D.M."/>
            <person name="Loveland J."/>
            <person name="Lovell J."/>
            <person name="Lush M.J."/>
            <person name="Lyne R."/>
            <person name="Martin S."/>
            <person name="Mashreghi-Mohammadi M."/>
            <person name="Matthews L."/>
            <person name="Matthews N.S.W."/>
            <person name="McLaren S."/>
            <person name="Milne S."/>
            <person name="Mistry S."/>
            <person name="Moore M.J.F."/>
            <person name="Nickerson T."/>
            <person name="O'Dell C.N."/>
            <person name="Oliver K."/>
            <person name="Palmeiri A."/>
            <person name="Palmer S.A."/>
            <person name="Parker A."/>
            <person name="Patel D."/>
            <person name="Pearce A.V."/>
            <person name="Peck A.I."/>
            <person name="Pelan S."/>
            <person name="Phelps K."/>
            <person name="Phillimore B.J."/>
            <person name="Plumb R."/>
            <person name="Rajan J."/>
            <person name="Raymond C."/>
            <person name="Rouse G."/>
            <person name="Saenphimmachak C."/>
            <person name="Sehra H.K."/>
            <person name="Sheridan E."/>
            <person name="Shownkeen R."/>
            <person name="Sims S."/>
            <person name="Skuce C.D."/>
            <person name="Smith M."/>
            <person name="Steward C."/>
            <person name="Subramanian S."/>
            <person name="Sycamore N."/>
            <person name="Tracey A."/>
            <person name="Tromans A."/>
            <person name="Van Helmond Z."/>
            <person name="Wall M."/>
            <person name="Wallis J.M."/>
            <person name="White S."/>
            <person name="Whitehead S.L."/>
            <person name="Wilkinson J.E."/>
            <person name="Willey D.L."/>
            <person name="Williams H."/>
            <person name="Wilming L."/>
            <person name="Wray P.W."/>
            <person name="Wu Z."/>
            <person name="Coulson A."/>
            <person name="Vaudin M."/>
            <person name="Sulston J.E."/>
            <person name="Durbin R.M."/>
            <person name="Hubbard T."/>
            <person name="Wooster R."/>
            <person name="Dunham I."/>
            <person name="Carter N.P."/>
            <person name="McVean G."/>
            <person name="Ross M.T."/>
            <person name="Harrow J."/>
            <person name="Olson M.V."/>
            <person name="Beck S."/>
            <person name="Rogers J."/>
            <person name="Bentley D.R."/>
        </authorList>
    </citation>
    <scope>NUCLEOTIDE SEQUENCE [LARGE SCALE GENOMIC DNA]</scope>
</reference>
<reference key="6">
    <citation type="submission" date="2005-07" db="EMBL/GenBank/DDBJ databases">
        <authorList>
            <person name="Mural R.J."/>
            <person name="Istrail S."/>
            <person name="Sutton G."/>
            <person name="Florea L."/>
            <person name="Halpern A.L."/>
            <person name="Mobarry C.M."/>
            <person name="Lippert R."/>
            <person name="Walenz B."/>
            <person name="Shatkay H."/>
            <person name="Dew I."/>
            <person name="Miller J.R."/>
            <person name="Flanigan M.J."/>
            <person name="Edwards N.J."/>
            <person name="Bolanos R."/>
            <person name="Fasulo D."/>
            <person name="Halldorsson B.V."/>
            <person name="Hannenhalli S."/>
            <person name="Turner R."/>
            <person name="Yooseph S."/>
            <person name="Lu F."/>
            <person name="Nusskern D.R."/>
            <person name="Shue B.C."/>
            <person name="Zheng X.H."/>
            <person name="Zhong F."/>
            <person name="Delcher A.L."/>
            <person name="Huson D.H."/>
            <person name="Kravitz S.A."/>
            <person name="Mouchard L."/>
            <person name="Reinert K."/>
            <person name="Remington K.A."/>
            <person name="Clark A.G."/>
            <person name="Waterman M.S."/>
            <person name="Eichler E.E."/>
            <person name="Adams M.D."/>
            <person name="Hunkapiller M.W."/>
            <person name="Myers E.W."/>
            <person name="Venter J.C."/>
        </authorList>
    </citation>
    <scope>NUCLEOTIDE SEQUENCE [LARGE SCALE GENOMIC DNA]</scope>
</reference>
<reference key="7">
    <citation type="journal article" date="2004" name="Genome Res.">
        <title>The status, quality, and expansion of the NIH full-length cDNA project: the Mammalian Gene Collection (MGC).</title>
        <authorList>
            <consortium name="The MGC Project Team"/>
        </authorList>
    </citation>
    <scope>NUCLEOTIDE SEQUENCE [LARGE SCALE MRNA] (ISOFORM A)</scope>
    <scope>VARIANT ILE-9</scope>
</reference>
<reference key="8">
    <citation type="journal article" date="2007" name="Hum. Mutat.">
        <title>Autosomal dominant anhidrotic ectodermal dysplasias at the EDARADD locus.</title>
        <authorList>
            <person name="Bal E."/>
            <person name="Baala L."/>
            <person name="Cluzeau C."/>
            <person name="El Kerch F."/>
            <person name="Ouldim K."/>
            <person name="Hadj-Rabia S."/>
            <person name="Bodemer C."/>
            <person name="Munnich A."/>
            <person name="Courtois G."/>
            <person name="Sefiani A."/>
            <person name="Smahi A."/>
        </authorList>
    </citation>
    <scope>VARIANT ECTD11A ARG-122</scope>
    <scope>CHARACTERIZATION OF VARIANT ECTD11A ARG-122</scope>
    <scope>CHARACTERIZATION OF VARIANT ECTD11B LYS-152</scope>
</reference>
<reference key="9">
    <citation type="journal article" date="2008" name="Eur. J. Hum. Genet.">
        <title>Mutation screening of the ectodysplasin-A receptor gene EDAR in hypohidrotic ectodermal dysplasia.</title>
        <authorList>
            <person name="van der Hout A.H."/>
            <person name="Oudesluijs G.G."/>
            <person name="Venema A."/>
            <person name="Verheij J.B.G.M."/>
            <person name="Mol B.G.J."/>
            <person name="Rump P."/>
            <person name="Brunner H.G."/>
            <person name="Vos Y.J."/>
            <person name="van Essen A.J."/>
        </authorList>
    </citation>
    <scope>VARIANT PHE-103</scope>
</reference>
<reference key="10">
    <citation type="journal article" date="2010" name="Br. J. Dermatol.">
        <title>Mutations in EDARADD account for a small proportion of hypohidrotic ectodermal dysplasia cases.</title>
        <authorList>
            <person name="Chassaing N."/>
            <person name="Cluzeau C."/>
            <person name="Bal E."/>
            <person name="Guigue P."/>
            <person name="Vincent M.C."/>
            <person name="Viot G."/>
            <person name="Ginisty D."/>
            <person name="Munnich A."/>
            <person name="Smahi A."/>
            <person name="Calvas P."/>
        </authorList>
    </citation>
    <scope>VARIANT ECTD11B 135-THR-VAL-136 DEL</scope>
    <scope>CHARACTERIZATION OF VARIANT ECTD11B 135-THR-VAL-136 DEL</scope>
</reference>
<reference key="11">
    <citation type="journal article" date="2011" name="Hum. Mutat.">
        <title>Only four genes (EDA1, EDAR, EDARADD, and WNT10A) account for 90% of hypohidrotic/anhidrotic ectodermal dysplasia cases.</title>
        <authorList>
            <person name="Cluzeau C."/>
            <person name="Hadj-Rabia S."/>
            <person name="Jambou M."/>
            <person name="Mansour S."/>
            <person name="Guigue P."/>
            <person name="Masmoudi S."/>
            <person name="Bal E."/>
            <person name="Chassaing N."/>
            <person name="Vincent M.C."/>
            <person name="Viot G."/>
            <person name="Clauss F."/>
            <person name="Maniere M.C."/>
            <person name="Toupenay S."/>
            <person name="Le Merrer M."/>
            <person name="Lyonnet S."/>
            <person name="Cormier-Daire V."/>
            <person name="Amiel J."/>
            <person name="Faivre L."/>
            <person name="de Prost Y."/>
            <person name="Munnich A."/>
            <person name="Bonnefont J.P."/>
            <person name="Bodemer C."/>
            <person name="Smahi A."/>
        </authorList>
    </citation>
    <scope>VARIANT ECTD11A TYR-114</scope>
</reference>
<dbReference type="EMBL" id="AY028914">
    <property type="protein sequence ID" value="AAK40288.1"/>
    <property type="molecule type" value="mRNA"/>
</dbReference>
<dbReference type="EMBL" id="AY071862">
    <property type="protein sequence ID" value="AAL60590.1"/>
    <property type="molecule type" value="mRNA"/>
</dbReference>
<dbReference type="EMBL" id="AY028912">
    <property type="protein sequence ID" value="AAK40285.1"/>
    <property type="molecule type" value="Genomic_DNA"/>
</dbReference>
<dbReference type="EMBL" id="AY028906">
    <property type="protein sequence ID" value="AAK40285.1"/>
    <property type="status" value="JOINED"/>
    <property type="molecule type" value="Genomic_DNA"/>
</dbReference>
<dbReference type="EMBL" id="AY028908">
    <property type="protein sequence ID" value="AAK40285.1"/>
    <property type="status" value="JOINED"/>
    <property type="molecule type" value="Genomic_DNA"/>
</dbReference>
<dbReference type="EMBL" id="AY028909">
    <property type="protein sequence ID" value="AAK40285.1"/>
    <property type="status" value="JOINED"/>
    <property type="molecule type" value="Genomic_DNA"/>
</dbReference>
<dbReference type="EMBL" id="AY028910">
    <property type="protein sequence ID" value="AAK40285.1"/>
    <property type="status" value="JOINED"/>
    <property type="molecule type" value="Genomic_DNA"/>
</dbReference>
<dbReference type="EMBL" id="AY028911">
    <property type="protein sequence ID" value="AAK40285.1"/>
    <property type="status" value="JOINED"/>
    <property type="molecule type" value="Genomic_DNA"/>
</dbReference>
<dbReference type="EMBL" id="AY028912">
    <property type="protein sequence ID" value="AAK40286.1"/>
    <property type="molecule type" value="Genomic_DNA"/>
</dbReference>
<dbReference type="EMBL" id="AY028907">
    <property type="protein sequence ID" value="AAK40286.1"/>
    <property type="status" value="JOINED"/>
    <property type="molecule type" value="Genomic_DNA"/>
</dbReference>
<dbReference type="EMBL" id="AY028908">
    <property type="protein sequence ID" value="AAK40286.1"/>
    <property type="status" value="JOINED"/>
    <property type="molecule type" value="Genomic_DNA"/>
</dbReference>
<dbReference type="EMBL" id="AY028909">
    <property type="protein sequence ID" value="AAK40286.1"/>
    <property type="status" value="JOINED"/>
    <property type="molecule type" value="Genomic_DNA"/>
</dbReference>
<dbReference type="EMBL" id="AY028910">
    <property type="protein sequence ID" value="AAK40286.1"/>
    <property type="status" value="JOINED"/>
    <property type="molecule type" value="Genomic_DNA"/>
</dbReference>
<dbReference type="EMBL" id="AY028911">
    <property type="protein sequence ID" value="AAK40286.1"/>
    <property type="status" value="JOINED"/>
    <property type="molecule type" value="Genomic_DNA"/>
</dbReference>
<dbReference type="EMBL" id="AY028913">
    <property type="protein sequence ID" value="AAK40287.1"/>
    <property type="molecule type" value="mRNA"/>
</dbReference>
<dbReference type="EMBL" id="AK290862">
    <property type="protein sequence ID" value="BAF83551.1"/>
    <property type="molecule type" value="mRNA"/>
</dbReference>
<dbReference type="EMBL" id="AK291930">
    <property type="protein sequence ID" value="BAF84619.1"/>
    <property type="molecule type" value="mRNA"/>
</dbReference>
<dbReference type="EMBL" id="AK314634">
    <property type="protein sequence ID" value="BAG37197.1"/>
    <property type="molecule type" value="mRNA"/>
</dbReference>
<dbReference type="EMBL" id="AL354693">
    <property type="status" value="NOT_ANNOTATED_CDS"/>
    <property type="molecule type" value="Genomic_DNA"/>
</dbReference>
<dbReference type="EMBL" id="AL136105">
    <property type="status" value="NOT_ANNOTATED_CDS"/>
    <property type="molecule type" value="Genomic_DNA"/>
</dbReference>
<dbReference type="EMBL" id="CH471098">
    <property type="protein sequence ID" value="EAW70052.1"/>
    <property type="molecule type" value="Genomic_DNA"/>
</dbReference>
<dbReference type="EMBL" id="BC128082">
    <property type="protein sequence ID" value="AAI28083.1"/>
    <property type="molecule type" value="mRNA"/>
</dbReference>
<dbReference type="CCDS" id="CCDS1610.1">
    <molecule id="Q8WWZ3-1"/>
</dbReference>
<dbReference type="CCDS" id="CCDS31065.1">
    <molecule id="Q8WWZ3-2"/>
</dbReference>
<dbReference type="RefSeq" id="NP_542776.1">
    <molecule id="Q8WWZ3-2"/>
    <property type="nucleotide sequence ID" value="NM_080738.5"/>
</dbReference>
<dbReference type="RefSeq" id="NP_665860.2">
    <molecule id="Q8WWZ3-1"/>
    <property type="nucleotide sequence ID" value="NM_145861.4"/>
</dbReference>
<dbReference type="SMR" id="Q8WWZ3"/>
<dbReference type="BioGRID" id="126096">
    <property type="interactions" value="16"/>
</dbReference>
<dbReference type="FunCoup" id="Q8WWZ3">
    <property type="interactions" value="681"/>
</dbReference>
<dbReference type="IntAct" id="Q8WWZ3">
    <property type="interactions" value="12"/>
</dbReference>
<dbReference type="STRING" id="9606.ENSP00000335076"/>
<dbReference type="iPTMnet" id="Q8WWZ3"/>
<dbReference type="PhosphoSitePlus" id="Q8WWZ3"/>
<dbReference type="BioMuta" id="EDARADD"/>
<dbReference type="DMDM" id="212276512"/>
<dbReference type="jPOST" id="Q8WWZ3"/>
<dbReference type="MassIVE" id="Q8WWZ3"/>
<dbReference type="PaxDb" id="9606-ENSP00000335076"/>
<dbReference type="PeptideAtlas" id="Q8WWZ3"/>
<dbReference type="ProteomicsDB" id="74963">
    <molecule id="Q8WWZ3-1"/>
</dbReference>
<dbReference type="ProteomicsDB" id="74964">
    <molecule id="Q8WWZ3-2"/>
</dbReference>
<dbReference type="Pumba" id="Q8WWZ3"/>
<dbReference type="Antibodypedia" id="20814">
    <property type="antibodies" value="33 antibodies from 15 providers"/>
</dbReference>
<dbReference type="DNASU" id="128178"/>
<dbReference type="Ensembl" id="ENST00000334232.9">
    <molecule id="Q8WWZ3-1"/>
    <property type="protein sequence ID" value="ENSP00000335076.4"/>
    <property type="gene ID" value="ENSG00000186197.15"/>
</dbReference>
<dbReference type="Ensembl" id="ENST00000359362.6">
    <molecule id="Q8WWZ3-2"/>
    <property type="protein sequence ID" value="ENSP00000352320.4"/>
    <property type="gene ID" value="ENSG00000186197.15"/>
</dbReference>
<dbReference type="GeneID" id="128178"/>
<dbReference type="KEGG" id="hsa:128178"/>
<dbReference type="MANE-Select" id="ENST00000334232.9">
    <property type="protein sequence ID" value="ENSP00000335076.4"/>
    <property type="RefSeq nucleotide sequence ID" value="NM_145861.4"/>
    <property type="RefSeq protein sequence ID" value="NP_665860.2"/>
</dbReference>
<dbReference type="UCSC" id="uc001hxu.2">
    <molecule id="Q8WWZ3-1"/>
    <property type="organism name" value="human"/>
</dbReference>
<dbReference type="AGR" id="HGNC:14341"/>
<dbReference type="CTD" id="128178"/>
<dbReference type="DisGeNET" id="128178"/>
<dbReference type="GeneCards" id="EDARADD"/>
<dbReference type="GeneReviews" id="EDARADD"/>
<dbReference type="HGNC" id="HGNC:14341">
    <property type="gene designation" value="EDARADD"/>
</dbReference>
<dbReference type="HPA" id="ENSG00000186197">
    <property type="expression patterns" value="Tissue enhanced (urinary)"/>
</dbReference>
<dbReference type="MalaCards" id="EDARADD"/>
<dbReference type="MIM" id="606603">
    <property type="type" value="gene"/>
</dbReference>
<dbReference type="MIM" id="614940">
    <property type="type" value="phenotype"/>
</dbReference>
<dbReference type="MIM" id="614941">
    <property type="type" value="phenotype"/>
</dbReference>
<dbReference type="neXtProt" id="NX_Q8WWZ3"/>
<dbReference type="OpenTargets" id="ENSG00000186197"/>
<dbReference type="Orphanet" id="1810">
    <property type="disease" value="Autosomal dominant hypohidrotic ectodermal dysplasia"/>
</dbReference>
<dbReference type="Orphanet" id="248">
    <property type="disease" value="Autosomal recessive hypohidrotic ectodermal dysplasia"/>
</dbReference>
<dbReference type="Orphanet" id="99798">
    <property type="disease" value="Oligodontia"/>
</dbReference>
<dbReference type="PharmGKB" id="PA27603"/>
<dbReference type="VEuPathDB" id="HostDB:ENSG00000186197"/>
<dbReference type="eggNOG" id="KOG4602">
    <property type="taxonomic scope" value="Eukaryota"/>
</dbReference>
<dbReference type="GeneTree" id="ENSGT00390000001136"/>
<dbReference type="HOGENOM" id="CLU_085398_0_0_1"/>
<dbReference type="InParanoid" id="Q8WWZ3"/>
<dbReference type="OMA" id="MACKEPF"/>
<dbReference type="OrthoDB" id="8673048at2759"/>
<dbReference type="PAN-GO" id="Q8WWZ3">
    <property type="GO annotations" value="0 GO annotations based on evolutionary models"/>
</dbReference>
<dbReference type="PhylomeDB" id="Q8WWZ3"/>
<dbReference type="TreeFam" id="TF335658"/>
<dbReference type="PathwayCommons" id="Q8WWZ3"/>
<dbReference type="Reactome" id="R-HSA-5669034">
    <property type="pathway name" value="TNFs bind their physiological receptors"/>
</dbReference>
<dbReference type="SignaLink" id="Q8WWZ3"/>
<dbReference type="BioGRID-ORCS" id="128178">
    <property type="hits" value="12 hits in 1149 CRISPR screens"/>
</dbReference>
<dbReference type="CD-CODE" id="FB4E32DD">
    <property type="entry name" value="Presynaptic clusters and postsynaptic densities"/>
</dbReference>
<dbReference type="ChiTaRS" id="EDARADD">
    <property type="organism name" value="human"/>
</dbReference>
<dbReference type="GeneWiki" id="EDARADD"/>
<dbReference type="GenomeRNAi" id="128178"/>
<dbReference type="Pharos" id="Q8WWZ3">
    <property type="development level" value="Tbio"/>
</dbReference>
<dbReference type="PRO" id="PR:Q8WWZ3"/>
<dbReference type="Proteomes" id="UP000005640">
    <property type="component" value="Chromosome 1"/>
</dbReference>
<dbReference type="RNAct" id="Q8WWZ3">
    <property type="molecule type" value="protein"/>
</dbReference>
<dbReference type="Bgee" id="ENSG00000186197">
    <property type="expression patterns" value="Expressed in islet of Langerhans and 95 other cell types or tissues"/>
</dbReference>
<dbReference type="ExpressionAtlas" id="Q8WWZ3">
    <property type="expression patterns" value="baseline and differential"/>
</dbReference>
<dbReference type="GO" id="GO:0005829">
    <property type="term" value="C:cytosol"/>
    <property type="evidence" value="ECO:0000304"/>
    <property type="project" value="Reactome"/>
</dbReference>
<dbReference type="GO" id="GO:0030154">
    <property type="term" value="P:cell differentiation"/>
    <property type="evidence" value="ECO:0007669"/>
    <property type="project" value="UniProtKB-KW"/>
</dbReference>
<dbReference type="GO" id="GO:0007165">
    <property type="term" value="P:signal transduction"/>
    <property type="evidence" value="ECO:0007669"/>
    <property type="project" value="InterPro"/>
</dbReference>
<dbReference type="FunFam" id="1.10.533.10:FF:000065">
    <property type="entry name" value="Ectodysplasin-A receptor-associated adapter protein"/>
    <property type="match status" value="1"/>
</dbReference>
<dbReference type="Gene3D" id="1.10.533.10">
    <property type="entry name" value="Death Domain, Fas"/>
    <property type="match status" value="1"/>
</dbReference>
<dbReference type="InterPro" id="IPR011029">
    <property type="entry name" value="DEATH-like_dom_sf"/>
</dbReference>
<dbReference type="InterPro" id="IPR000488">
    <property type="entry name" value="Death_dom"/>
</dbReference>
<dbReference type="InterPro" id="IPR039200">
    <property type="entry name" value="EDARADD"/>
</dbReference>
<dbReference type="PANTHER" id="PTHR28469">
    <property type="entry name" value="ECTODYSPLASIN-A RECEPTOR-ASSOCIATED ADAPTER PROTEIN"/>
    <property type="match status" value="1"/>
</dbReference>
<dbReference type="PANTHER" id="PTHR28469:SF1">
    <property type="entry name" value="ECTODYSPLASIN-A RECEPTOR-ASSOCIATED ADAPTER PROTEIN"/>
    <property type="match status" value="1"/>
</dbReference>
<dbReference type="Pfam" id="PF00531">
    <property type="entry name" value="Death"/>
    <property type="match status" value="1"/>
</dbReference>
<dbReference type="SUPFAM" id="SSF47986">
    <property type="entry name" value="DEATH domain"/>
    <property type="match status" value="1"/>
</dbReference>
<gene>
    <name type="primary">EDARADD</name>
</gene>
<proteinExistence type="evidence at protein level"/>